<comment type="function">
    <text evidence="1">Catalyzes the attachment of threonine to tRNA(Thr) in a two-step reaction: L-threonine is first activated by ATP to form Thr-AMP and then transferred to the acceptor end of tRNA(Thr). Also edits incorrectly charged L-seryl-tRNA(Thr).</text>
</comment>
<comment type="catalytic activity">
    <reaction evidence="1">
        <text>tRNA(Thr) + L-threonine + ATP = L-threonyl-tRNA(Thr) + AMP + diphosphate + H(+)</text>
        <dbReference type="Rhea" id="RHEA:24624"/>
        <dbReference type="Rhea" id="RHEA-COMP:9670"/>
        <dbReference type="Rhea" id="RHEA-COMP:9704"/>
        <dbReference type="ChEBI" id="CHEBI:15378"/>
        <dbReference type="ChEBI" id="CHEBI:30616"/>
        <dbReference type="ChEBI" id="CHEBI:33019"/>
        <dbReference type="ChEBI" id="CHEBI:57926"/>
        <dbReference type="ChEBI" id="CHEBI:78442"/>
        <dbReference type="ChEBI" id="CHEBI:78534"/>
        <dbReference type="ChEBI" id="CHEBI:456215"/>
        <dbReference type="EC" id="6.1.1.3"/>
    </reaction>
</comment>
<comment type="cofactor">
    <cofactor evidence="1">
        <name>Zn(2+)</name>
        <dbReference type="ChEBI" id="CHEBI:29105"/>
    </cofactor>
    <text evidence="1">Binds 1 zinc ion per subunit.</text>
</comment>
<comment type="subunit">
    <text evidence="1">Homodimer.</text>
</comment>
<comment type="subcellular location">
    <subcellularLocation>
        <location evidence="1">Cytoplasm</location>
    </subcellularLocation>
</comment>
<comment type="similarity">
    <text evidence="1">Belongs to the class-II aminoacyl-tRNA synthetase family.</text>
</comment>
<organism>
    <name type="scientific">Francisella tularensis subsp. holarctica (strain FTNF002-00 / FTA)</name>
    <dbReference type="NCBI Taxonomy" id="458234"/>
    <lineage>
        <taxon>Bacteria</taxon>
        <taxon>Pseudomonadati</taxon>
        <taxon>Pseudomonadota</taxon>
        <taxon>Gammaproteobacteria</taxon>
        <taxon>Thiotrichales</taxon>
        <taxon>Francisellaceae</taxon>
        <taxon>Francisella</taxon>
    </lineage>
</organism>
<reference key="1">
    <citation type="journal article" date="2009" name="PLoS ONE">
        <title>Complete genome sequence of Francisella tularensis subspecies holarctica FTNF002-00.</title>
        <authorList>
            <person name="Barabote R.D."/>
            <person name="Xie G."/>
            <person name="Brettin T.S."/>
            <person name="Hinrichs S.H."/>
            <person name="Fey P.D."/>
            <person name="Jay J.J."/>
            <person name="Engle J.L."/>
            <person name="Godbole S.D."/>
            <person name="Noronha J.M."/>
            <person name="Scheuermann R.H."/>
            <person name="Zhou L.W."/>
            <person name="Lion C."/>
            <person name="Dempsey M.P."/>
        </authorList>
    </citation>
    <scope>NUCLEOTIDE SEQUENCE [LARGE SCALE GENOMIC DNA]</scope>
    <source>
        <strain>FTNF002-00 / FTA</strain>
    </source>
</reference>
<protein>
    <recommendedName>
        <fullName evidence="1">Threonine--tRNA ligase</fullName>
        <ecNumber evidence="1">6.1.1.3</ecNumber>
    </recommendedName>
    <alternativeName>
        <fullName evidence="1">Threonyl-tRNA synthetase</fullName>
        <shortName evidence="1">ThrRS</shortName>
    </alternativeName>
</protein>
<accession>A7NDB6</accession>
<evidence type="ECO:0000255" key="1">
    <source>
        <dbReference type="HAMAP-Rule" id="MF_00184"/>
    </source>
</evidence>
<evidence type="ECO:0000255" key="2">
    <source>
        <dbReference type="PROSITE-ProRule" id="PRU01228"/>
    </source>
</evidence>
<name>SYT_FRATF</name>
<gene>
    <name evidence="1" type="primary">thrS</name>
    <name type="ordered locus">FTA_1494</name>
</gene>
<feature type="chain" id="PRO_1000020391" description="Threonine--tRNA ligase">
    <location>
        <begin position="1"/>
        <end position="634"/>
    </location>
</feature>
<feature type="domain" description="TGS" evidence="2">
    <location>
        <begin position="1"/>
        <end position="61"/>
    </location>
</feature>
<feature type="region of interest" description="Catalytic" evidence="1">
    <location>
        <begin position="241"/>
        <end position="532"/>
    </location>
</feature>
<feature type="binding site" evidence="1">
    <location>
        <position position="332"/>
    </location>
    <ligand>
        <name>Zn(2+)</name>
        <dbReference type="ChEBI" id="CHEBI:29105"/>
    </ligand>
</feature>
<feature type="binding site" evidence="1">
    <location>
        <position position="383"/>
    </location>
    <ligand>
        <name>Zn(2+)</name>
        <dbReference type="ChEBI" id="CHEBI:29105"/>
    </ligand>
</feature>
<feature type="binding site" evidence="1">
    <location>
        <position position="509"/>
    </location>
    <ligand>
        <name>Zn(2+)</name>
        <dbReference type="ChEBI" id="CHEBI:29105"/>
    </ligand>
</feature>
<dbReference type="EC" id="6.1.1.3" evidence="1"/>
<dbReference type="EMBL" id="CP000803">
    <property type="protein sequence ID" value="ABU61969.1"/>
    <property type="molecule type" value="Genomic_DNA"/>
</dbReference>
<dbReference type="RefSeq" id="WP_003016677.1">
    <property type="nucleotide sequence ID" value="NC_009749.1"/>
</dbReference>
<dbReference type="SMR" id="A7NDB6"/>
<dbReference type="KEGG" id="fta:FTA_1494"/>
<dbReference type="HOGENOM" id="CLU_008554_0_1_6"/>
<dbReference type="GO" id="GO:0005737">
    <property type="term" value="C:cytoplasm"/>
    <property type="evidence" value="ECO:0007669"/>
    <property type="project" value="UniProtKB-SubCell"/>
</dbReference>
<dbReference type="GO" id="GO:0005524">
    <property type="term" value="F:ATP binding"/>
    <property type="evidence" value="ECO:0007669"/>
    <property type="project" value="UniProtKB-UniRule"/>
</dbReference>
<dbReference type="GO" id="GO:0046872">
    <property type="term" value="F:metal ion binding"/>
    <property type="evidence" value="ECO:0007669"/>
    <property type="project" value="UniProtKB-KW"/>
</dbReference>
<dbReference type="GO" id="GO:0004829">
    <property type="term" value="F:threonine-tRNA ligase activity"/>
    <property type="evidence" value="ECO:0007669"/>
    <property type="project" value="UniProtKB-UniRule"/>
</dbReference>
<dbReference type="GO" id="GO:0000049">
    <property type="term" value="F:tRNA binding"/>
    <property type="evidence" value="ECO:0007669"/>
    <property type="project" value="UniProtKB-KW"/>
</dbReference>
<dbReference type="GO" id="GO:0006435">
    <property type="term" value="P:threonyl-tRNA aminoacylation"/>
    <property type="evidence" value="ECO:0007669"/>
    <property type="project" value="UniProtKB-UniRule"/>
</dbReference>
<dbReference type="CDD" id="cd01667">
    <property type="entry name" value="TGS_ThrRS"/>
    <property type="match status" value="1"/>
</dbReference>
<dbReference type="CDD" id="cd00860">
    <property type="entry name" value="ThrRS_anticodon"/>
    <property type="match status" value="1"/>
</dbReference>
<dbReference type="CDD" id="cd00771">
    <property type="entry name" value="ThrRS_core"/>
    <property type="match status" value="1"/>
</dbReference>
<dbReference type="FunFam" id="3.10.20.30:FF:000005">
    <property type="entry name" value="Threonine--tRNA ligase"/>
    <property type="match status" value="1"/>
</dbReference>
<dbReference type="FunFam" id="3.30.54.20:FF:000002">
    <property type="entry name" value="Threonine--tRNA ligase"/>
    <property type="match status" value="1"/>
</dbReference>
<dbReference type="FunFam" id="3.30.930.10:FF:000002">
    <property type="entry name" value="Threonine--tRNA ligase"/>
    <property type="match status" value="1"/>
</dbReference>
<dbReference type="FunFam" id="3.40.50.800:FF:000001">
    <property type="entry name" value="Threonine--tRNA ligase"/>
    <property type="match status" value="1"/>
</dbReference>
<dbReference type="FunFam" id="3.30.980.10:FF:000005">
    <property type="entry name" value="Threonyl-tRNA synthetase, mitochondrial"/>
    <property type="match status" value="1"/>
</dbReference>
<dbReference type="Gene3D" id="3.10.20.30">
    <property type="match status" value="1"/>
</dbReference>
<dbReference type="Gene3D" id="3.30.54.20">
    <property type="match status" value="1"/>
</dbReference>
<dbReference type="Gene3D" id="3.40.50.800">
    <property type="entry name" value="Anticodon-binding domain"/>
    <property type="match status" value="1"/>
</dbReference>
<dbReference type="Gene3D" id="3.30.930.10">
    <property type="entry name" value="Bira Bifunctional Protein, Domain 2"/>
    <property type="match status" value="1"/>
</dbReference>
<dbReference type="Gene3D" id="3.30.980.10">
    <property type="entry name" value="Threonyl-trna Synthetase, Chain A, domain 2"/>
    <property type="match status" value="1"/>
</dbReference>
<dbReference type="HAMAP" id="MF_00184">
    <property type="entry name" value="Thr_tRNA_synth"/>
    <property type="match status" value="1"/>
</dbReference>
<dbReference type="InterPro" id="IPR002314">
    <property type="entry name" value="aa-tRNA-synt_IIb"/>
</dbReference>
<dbReference type="InterPro" id="IPR006195">
    <property type="entry name" value="aa-tRNA-synth_II"/>
</dbReference>
<dbReference type="InterPro" id="IPR045864">
    <property type="entry name" value="aa-tRNA-synth_II/BPL/LPL"/>
</dbReference>
<dbReference type="InterPro" id="IPR004154">
    <property type="entry name" value="Anticodon-bd"/>
</dbReference>
<dbReference type="InterPro" id="IPR036621">
    <property type="entry name" value="Anticodon-bd_dom_sf"/>
</dbReference>
<dbReference type="InterPro" id="IPR012675">
    <property type="entry name" value="Beta-grasp_dom_sf"/>
</dbReference>
<dbReference type="InterPro" id="IPR004095">
    <property type="entry name" value="TGS"/>
</dbReference>
<dbReference type="InterPro" id="IPR012676">
    <property type="entry name" value="TGS-like"/>
</dbReference>
<dbReference type="InterPro" id="IPR002320">
    <property type="entry name" value="Thr-tRNA-ligase_IIa"/>
</dbReference>
<dbReference type="InterPro" id="IPR018163">
    <property type="entry name" value="Thr/Ala-tRNA-synth_IIc_edit"/>
</dbReference>
<dbReference type="InterPro" id="IPR047246">
    <property type="entry name" value="ThrRS_anticodon"/>
</dbReference>
<dbReference type="InterPro" id="IPR033728">
    <property type="entry name" value="ThrRS_core"/>
</dbReference>
<dbReference type="InterPro" id="IPR012947">
    <property type="entry name" value="tRNA_SAD"/>
</dbReference>
<dbReference type="NCBIfam" id="TIGR00418">
    <property type="entry name" value="thrS"/>
    <property type="match status" value="1"/>
</dbReference>
<dbReference type="PANTHER" id="PTHR11451:SF44">
    <property type="entry name" value="THREONINE--TRNA LIGASE, CHLOROPLASTIC_MITOCHONDRIAL 2"/>
    <property type="match status" value="1"/>
</dbReference>
<dbReference type="PANTHER" id="PTHR11451">
    <property type="entry name" value="THREONINE-TRNA LIGASE"/>
    <property type="match status" value="1"/>
</dbReference>
<dbReference type="Pfam" id="PF03129">
    <property type="entry name" value="HGTP_anticodon"/>
    <property type="match status" value="1"/>
</dbReference>
<dbReference type="Pfam" id="PF02824">
    <property type="entry name" value="TGS"/>
    <property type="match status" value="1"/>
</dbReference>
<dbReference type="Pfam" id="PF00587">
    <property type="entry name" value="tRNA-synt_2b"/>
    <property type="match status" value="1"/>
</dbReference>
<dbReference type="Pfam" id="PF07973">
    <property type="entry name" value="tRNA_SAD"/>
    <property type="match status" value="1"/>
</dbReference>
<dbReference type="PRINTS" id="PR01047">
    <property type="entry name" value="TRNASYNTHTHR"/>
</dbReference>
<dbReference type="SMART" id="SM00863">
    <property type="entry name" value="tRNA_SAD"/>
    <property type="match status" value="1"/>
</dbReference>
<dbReference type="SUPFAM" id="SSF52954">
    <property type="entry name" value="Class II aaRS ABD-related"/>
    <property type="match status" value="1"/>
</dbReference>
<dbReference type="SUPFAM" id="SSF55681">
    <property type="entry name" value="Class II aaRS and biotin synthetases"/>
    <property type="match status" value="1"/>
</dbReference>
<dbReference type="SUPFAM" id="SSF81271">
    <property type="entry name" value="TGS-like"/>
    <property type="match status" value="1"/>
</dbReference>
<dbReference type="SUPFAM" id="SSF55186">
    <property type="entry name" value="ThrRS/AlaRS common domain"/>
    <property type="match status" value="1"/>
</dbReference>
<dbReference type="PROSITE" id="PS50862">
    <property type="entry name" value="AA_TRNA_LIGASE_II"/>
    <property type="match status" value="1"/>
</dbReference>
<dbReference type="PROSITE" id="PS51880">
    <property type="entry name" value="TGS"/>
    <property type="match status" value="1"/>
</dbReference>
<keyword id="KW-0030">Aminoacyl-tRNA synthetase</keyword>
<keyword id="KW-0067">ATP-binding</keyword>
<keyword id="KW-0963">Cytoplasm</keyword>
<keyword id="KW-0436">Ligase</keyword>
<keyword id="KW-0479">Metal-binding</keyword>
<keyword id="KW-0547">Nucleotide-binding</keyword>
<keyword id="KW-0648">Protein biosynthesis</keyword>
<keyword id="KW-0694">RNA-binding</keyword>
<keyword id="KW-0820">tRNA-binding</keyword>
<keyword id="KW-0862">Zinc</keyword>
<sequence length="634" mass="72382">MINIRFPDGSIREFEAGVNSLDVAKSISPSLAKATMAAYIDDQLKDAKDAINSNCELRLITVKDPEGLEILRHSCAHLLAHAVKELYPNTEVTIGPVVDNGFYYDFSFKESIGEADLPTIEKKMKELAKKSAPVSYRVVPKAEAIEFFKAQGENYKVEIIDSIADEQMKIYTQDNFSDLCRGPHIPNTSVLKAFKLTKLAGAYWRGNSDNEMLTRIYGTCWATKEDLEQYLNMLEEAEKRDHRKIGKVLDLFHFQEDSPGIAFWHDNGVRIWRQVEDYMRASNNKYGCSEIRTPLIADFSLWQKSGHASKYAENMFATKSENRDFAIRPMNCPTCVQVYNTKLHSYRDLPIRMAEFGIVHRNEPSGSLHGLLRVRSFTQDDGHIFCTPEQVEEEVILMVQQCFEVYKDFGFNDFAVKIALRPENRIGDDETWDKSEQILKNALDANNVSYELFPGEGAFYGPKIEFHLKDAIGRSWQCGTIQLDFSMPQRLGATYIDKNGEKQVSVMLHRAIVGSLERFIGMLIEHYAGNLPLWLAPVQVAVMGISNNQDDYCKEVFIMLEKNGIRAKLDLRNEKIGFKIREHTLLRVPYLVILGKNEQEQKIITIRKHSGEDLGQMSVDDFCAFLDKQIQAKE</sequence>
<proteinExistence type="inferred from homology"/>